<evidence type="ECO:0000250" key="1">
    <source>
        <dbReference type="UniProtKB" id="P22892"/>
    </source>
</evidence>
<evidence type="ECO:0000255" key="2">
    <source>
        <dbReference type="PROSITE-ProRule" id="PRU00093"/>
    </source>
</evidence>
<evidence type="ECO:0000256" key="3">
    <source>
        <dbReference type="SAM" id="MobiDB-lite"/>
    </source>
</evidence>
<evidence type="ECO:0000269" key="4">
    <source>
    </source>
</evidence>
<evidence type="ECO:0000269" key="5">
    <source>
    </source>
</evidence>
<evidence type="ECO:0000269" key="6">
    <source>
    </source>
</evidence>
<evidence type="ECO:0000269" key="7">
    <source>
    </source>
</evidence>
<evidence type="ECO:0000269" key="8">
    <source>
    </source>
</evidence>
<evidence type="ECO:0000269" key="9">
    <source>
    </source>
</evidence>
<evidence type="ECO:0000269" key="10">
    <source>
    </source>
</evidence>
<evidence type="ECO:0000269" key="11">
    <source>
    </source>
</evidence>
<evidence type="ECO:0000303" key="12">
    <source>
    </source>
</evidence>
<evidence type="ECO:0000305" key="13"/>
<evidence type="ECO:0007829" key="14">
    <source>
        <dbReference type="PDB" id="1IU1"/>
    </source>
</evidence>
<gene>
    <name type="primary">AP1G1</name>
    <name type="synonym">ADTG</name>
    <name type="synonym">CLAPG1</name>
</gene>
<accession>O43747</accession>
<accession>O75709</accession>
<accession>O75842</accession>
<accession>Q9UG09</accession>
<accession>Q9Y3U4</accession>
<sequence length="822" mass="91351">MPAPIRLRELIRTIRTARTQAEEREMIQKECAAIRSSFREEDNTYRCRNVAKLLYMHMLGYPAHFGQLECLKLIASQKFTDKRIGYLGAMLLLDERQDVHLLMTNCIKNDLNHSTQFVQGLALCTLGCMGSSEMCRDLAGEVEKLLKTSNSYLRKKAALCAVHVIRKVPELMEMFLPATKNLLNEKNHGVLHTSVVLLTEMCERSPDMLAHFRKLVPQLVRILKNLIMSGYSPEHDVSGISDPFLQVRILRLLRILGRNDDDSSEAMNDILAQVATNTETSKNVGNAILYETVLTIMDIKSESGLRVLAINILGRFLLNNDKNIRYVALTSLLKTVQTDHNAVQRHRSTIVDCLKDLDVSIKRRAMELSFALVNGNNIRGMMKELLYFLDSCEPEFKADCASGIFLAAEKYAPSKRWHIDTIMRVLTTAGSYVRDDAVPNLIQLITNSVEMHAYTVQRLYKAILGDYSQQPLVQVAAWCIGEYGDLLVSGQCEEEEPIQVTEDEVLDILESVLISNMSTSVTRGYALTAIMKLSTRFTCTVNRIKKVVSIYGSSIDVELQQRAVEYNALFKKYDHMRSALLERMPVMEKVTTNGPTEIVQTNGETEPAPLETKPPPSGPQPTSQANDLLDLLGGNDITPVIPTAPTSKPSSAGGELLDLLGDINLTGAPAAAPAPASVPQISQPPFLLDGLSSQPLFNDIAAGIPSITAYSKNGLKIEFTFERSNTNPSVTVITIQASNSTELDMTDFVFQAAVPKTFQLQLLSPSSSIVPAFNTGTITQVIKVLNPQKQQLRMRIKLTYNHKGSAMQDLAEVNNFPPQSWQ</sequence>
<comment type="function">
    <text evidence="8 10">Subunit of clathrin-associated adaptor protein complex 1 that plays a role in protein sorting in the late-Golgi/trans-Golgi network (TGN) and/or endosomes. The AP complexes mediate both the recruitment of clathrin to membranes and the recognition of sorting signals within the cytosolic tails of transmembrane cargo molecules. In association with AFTPH/aftiphilin in the aftiphilin/p200/gamma-synergin complex, involved in the trafficking of transferrin from early to recycling endosomes, and the membrane trafficking of furin and the lysosomal enzyme cathepsin D between the trans-Golgi network (TGN) and endosomes (PubMed:15758025).</text>
</comment>
<comment type="subunit">
    <text evidence="1 4 5 6 7 8 9 10">Adaptor protein complex 1 (AP-1) is a heterotetramer composed of two large adaptins (gamma-type subunit AP1G1 and beta-type subunit AP1B1), a medium adaptin (mu-type subunit AP1M1 or AP1M2) and a small adaptin (sigma-type subunit AP1S1 or AP1S2 or AP1S3) (PubMed:34102099). Interacts (via GAE domain) with RABEP1 (PubMed:12042876, PubMed:12773381, PubMed:14665628). Interacts with SYNRG/gamma-synergin (PubMed:12042876). Interacts with EPS15 (By similarity). Interacts (via GAE domain) with AP1AR (via coiled-coil domain) (PubMed:15775984). Interacts with CLN3 (via dileucine motif); this interaction facilitates lysosomal targeting (PubMed:15598649). Interacts (via GAE domain) with AFTPH/aftiphilin; the interaction is required to recruit AFTPH/aftiphilin to the perinuclear region of the cell (PubMed:14665628, PubMed:15758025).</text>
</comment>
<comment type="interaction">
    <interactant intactId="EBI-447609">
        <id>O43747</id>
    </interactant>
    <interactant intactId="EBI-1054374">
        <id>P56377</id>
        <label>AP1S2</label>
    </interactant>
    <organismsDiffer>false</organismsDiffer>
    <experiments>4</experiments>
</comment>
<comment type="interaction">
    <interactant intactId="EBI-447609">
        <id>O43747</id>
    </interactant>
    <interactant intactId="EBI-447043">
        <id>Q15276</id>
        <label>RABEP1</label>
    </interactant>
    <organismsDiffer>false</organismsDiffer>
    <experiments>2</experiments>
</comment>
<comment type="interaction">
    <interactant intactId="EBI-10185819">
        <id>O43747-2</id>
    </interactant>
    <interactant intactId="EBI-719906">
        <id>Q6PD74</id>
        <label>AAGAB</label>
    </interactant>
    <organismsDiffer>false</organismsDiffer>
    <experiments>4</experiments>
</comment>
<comment type="interaction">
    <interactant intactId="EBI-10185819">
        <id>O43747-2</id>
    </interactant>
    <interactant intactId="EBI-1054374">
        <id>P56377</id>
        <label>AP1S2</label>
    </interactant>
    <organismsDiffer>false</organismsDiffer>
    <experiments>4</experiments>
</comment>
<comment type="interaction">
    <interactant intactId="EBI-10185819">
        <id>O43747-2</id>
    </interactant>
    <interactant intactId="EBI-930964">
        <id>P54253</id>
        <label>ATXN1</label>
    </interactant>
    <organismsDiffer>false</organismsDiffer>
    <experiments>3</experiments>
</comment>
<comment type="interaction">
    <interactant intactId="EBI-10185819">
        <id>O43747-2</id>
    </interactant>
    <interactant intactId="EBI-348604">
        <id>Q96S82</id>
        <label>UBL7</label>
    </interactant>
    <organismsDiffer>false</organismsDiffer>
    <experiments>6</experiments>
</comment>
<comment type="subcellular location">
    <subcellularLocation>
        <location evidence="5">Golgi apparatus</location>
    </subcellularLocation>
    <subcellularLocation>
        <location evidence="5">Cytoplasmic vesicle</location>
        <location evidence="5">Clathrin-coated vesicle membrane</location>
        <topology evidence="5">Peripheral membrane protein</topology>
        <orientation evidence="5">Cytoplasmic side</orientation>
    </subcellularLocation>
    <subcellularLocation>
        <location evidence="8">Cytoplasm</location>
    </subcellularLocation>
    <subcellularLocation>
        <location evidence="8 10">Cytoplasm</location>
        <location evidence="8 10">Perinuclear region</location>
    </subcellularLocation>
    <subcellularLocation>
        <location evidence="8">Cytoplasmic vesicle</location>
        <location evidence="8">Clathrin-coated vesicle</location>
    </subcellularLocation>
    <subcellularLocation>
        <location evidence="10">Membrane</location>
        <location evidence="10">Clathrin-coated pit</location>
    </subcellularLocation>
    <text evidence="5 8">Component of the coat surrounding the cytoplasmic face of coated vesicles located at the Golgi complex (PubMed:12773381). Co-localizes with AFTPH/aftiphilin in the cytoplasm (PubMed:15758025).</text>
</comment>
<comment type="alternative products">
    <event type="alternative splicing"/>
    <isoform>
        <id>O43747-1</id>
        <name>1</name>
        <sequence type="displayed"/>
    </isoform>
    <isoform>
        <id>O43747-2</id>
        <name>2</name>
        <sequence type="described" ref="VSP_040133"/>
    </isoform>
</comment>
<comment type="tissue specificity">
    <text>Widely expressed.</text>
</comment>
<comment type="disease" evidence="10">
    <disease id="DI-06259">
        <name>Usmani-Riazuddin syndrome, autosomal dominant</name>
        <acronym>USRISD</acronym>
        <description>A neurodevelopmental disorder characterized by global developmental delay with impaired intellectual development and speech delay, hypotonia, and behavioral abnormalities. More variable additional features may include seizures and distal limb anomalies.</description>
        <dbReference type="MIM" id="619467"/>
    </disease>
    <text>The disease is caused by variants affecting the gene represented in this entry.</text>
</comment>
<comment type="disease" evidence="10">
    <disease id="DI-06260">
        <name>Usmani-Riazuddin syndrome, autosomal recessive</name>
        <acronym>USRISR</acronym>
        <description>A neurodevelopmental disorder characterized by global developmental delay with impaired intellectual development and speech delay, hypotonia, spasticity, and behavioral abnormalities. More variable additional features may include seizures, scoliosis, and joint laxity.</description>
        <dbReference type="MIM" id="619548"/>
    </disease>
    <text>The disease is caused by variants affecting the gene represented in this entry.</text>
</comment>
<comment type="similarity">
    <text evidence="13">Belongs to the adaptor complexes large subunit family.</text>
</comment>
<keyword id="KW-0002">3D-structure</keyword>
<keyword id="KW-0025">Alternative splicing</keyword>
<keyword id="KW-0168">Coated pit</keyword>
<keyword id="KW-0963">Cytoplasm</keyword>
<keyword id="KW-0968">Cytoplasmic vesicle</keyword>
<keyword id="KW-0225">Disease variant</keyword>
<keyword id="KW-0333">Golgi apparatus</keyword>
<keyword id="KW-0991">Intellectual disability</keyword>
<keyword id="KW-0472">Membrane</keyword>
<keyword id="KW-0653">Protein transport</keyword>
<keyword id="KW-1267">Proteomics identification</keyword>
<keyword id="KW-1185">Reference proteome</keyword>
<keyword id="KW-0813">Transport</keyword>
<reference key="1">
    <citation type="journal article" date="1998" name="Genomics">
        <title>Cloning, expression pattern, and chromosomal assignment to 16q23 of the human gamma-adaptin gene (ADTG).</title>
        <authorList>
            <person name="Peyrard M."/>
            <person name="Parveneh S."/>
            <person name="Lagerkrantz S."/>
            <person name="Ekman M."/>
            <person name="Fransson I."/>
            <person name="Sahlen S."/>
            <person name="Dumanski J.P."/>
        </authorList>
    </citation>
    <scope>NUCLEOTIDE SEQUENCE [GENOMIC DNA / MRNA] (ISOFORM 2)</scope>
</reference>
<reference key="2">
    <citation type="journal article" date="1998" name="J. Biol. Chem.">
        <title>Identification and characterization of novel clathrin adaptor-related proteins.</title>
        <authorList>
            <person name="Takatsu H."/>
            <person name="Sakurai M."/>
            <person name="Shin H.-W."/>
            <person name="Murakami K."/>
            <person name="Nakayama K."/>
        </authorList>
    </citation>
    <scope>NUCLEOTIDE SEQUENCE [MRNA] (ISOFORM 1)</scope>
    <scope>VARIANT HIS-685</scope>
</reference>
<reference key="3">
    <citation type="journal article" date="2004" name="Nature">
        <title>The sequence and analysis of duplication-rich human chromosome 16.</title>
        <authorList>
            <person name="Martin J."/>
            <person name="Han C."/>
            <person name="Gordon L.A."/>
            <person name="Terry A."/>
            <person name="Prabhakar S."/>
            <person name="She X."/>
            <person name="Xie G."/>
            <person name="Hellsten U."/>
            <person name="Chan Y.M."/>
            <person name="Altherr M."/>
            <person name="Couronne O."/>
            <person name="Aerts A."/>
            <person name="Bajorek E."/>
            <person name="Black S."/>
            <person name="Blumer H."/>
            <person name="Branscomb E."/>
            <person name="Brown N.C."/>
            <person name="Bruno W.J."/>
            <person name="Buckingham J.M."/>
            <person name="Callen D.F."/>
            <person name="Campbell C.S."/>
            <person name="Campbell M.L."/>
            <person name="Campbell E.W."/>
            <person name="Caoile C."/>
            <person name="Challacombe J.F."/>
            <person name="Chasteen L.A."/>
            <person name="Chertkov O."/>
            <person name="Chi H.C."/>
            <person name="Christensen M."/>
            <person name="Clark L.M."/>
            <person name="Cohn J.D."/>
            <person name="Denys M."/>
            <person name="Detter J.C."/>
            <person name="Dickson M."/>
            <person name="Dimitrijevic-Bussod M."/>
            <person name="Escobar J."/>
            <person name="Fawcett J.J."/>
            <person name="Flowers D."/>
            <person name="Fotopulos D."/>
            <person name="Glavina T."/>
            <person name="Gomez M."/>
            <person name="Gonzales E."/>
            <person name="Goodstein D."/>
            <person name="Goodwin L.A."/>
            <person name="Grady D.L."/>
            <person name="Grigoriev I."/>
            <person name="Groza M."/>
            <person name="Hammon N."/>
            <person name="Hawkins T."/>
            <person name="Haydu L."/>
            <person name="Hildebrand C.E."/>
            <person name="Huang W."/>
            <person name="Israni S."/>
            <person name="Jett J."/>
            <person name="Jewett P.B."/>
            <person name="Kadner K."/>
            <person name="Kimball H."/>
            <person name="Kobayashi A."/>
            <person name="Krawczyk M.-C."/>
            <person name="Leyba T."/>
            <person name="Longmire J.L."/>
            <person name="Lopez F."/>
            <person name="Lou Y."/>
            <person name="Lowry S."/>
            <person name="Ludeman T."/>
            <person name="Manohar C.F."/>
            <person name="Mark G.A."/>
            <person name="McMurray K.L."/>
            <person name="Meincke L.J."/>
            <person name="Morgan J."/>
            <person name="Moyzis R.K."/>
            <person name="Mundt M.O."/>
            <person name="Munk A.C."/>
            <person name="Nandkeshwar R.D."/>
            <person name="Pitluck S."/>
            <person name="Pollard M."/>
            <person name="Predki P."/>
            <person name="Parson-Quintana B."/>
            <person name="Ramirez L."/>
            <person name="Rash S."/>
            <person name="Retterer J."/>
            <person name="Ricke D.O."/>
            <person name="Robinson D.L."/>
            <person name="Rodriguez A."/>
            <person name="Salamov A."/>
            <person name="Saunders E.H."/>
            <person name="Scott D."/>
            <person name="Shough T."/>
            <person name="Stallings R.L."/>
            <person name="Stalvey M."/>
            <person name="Sutherland R.D."/>
            <person name="Tapia R."/>
            <person name="Tesmer J.G."/>
            <person name="Thayer N."/>
            <person name="Thompson L.S."/>
            <person name="Tice H."/>
            <person name="Torney D.C."/>
            <person name="Tran-Gyamfi M."/>
            <person name="Tsai M."/>
            <person name="Ulanovsky L.E."/>
            <person name="Ustaszewska A."/>
            <person name="Vo N."/>
            <person name="White P.S."/>
            <person name="Williams A.L."/>
            <person name="Wills P.L."/>
            <person name="Wu J.-R."/>
            <person name="Wu K."/>
            <person name="Yang J."/>
            <person name="DeJong P."/>
            <person name="Bruce D."/>
            <person name="Doggett N.A."/>
            <person name="Deaven L."/>
            <person name="Schmutz J."/>
            <person name="Grimwood J."/>
            <person name="Richardson P."/>
            <person name="Rokhsar D.S."/>
            <person name="Eichler E.E."/>
            <person name="Gilna P."/>
            <person name="Lucas S.M."/>
            <person name="Myers R.M."/>
            <person name="Rubin E.M."/>
            <person name="Pennacchio L.A."/>
        </authorList>
    </citation>
    <scope>NUCLEOTIDE SEQUENCE [LARGE SCALE GENOMIC DNA]</scope>
</reference>
<reference key="4">
    <citation type="journal article" date="2007" name="BMC Genomics">
        <title>The full-ORF clone resource of the German cDNA consortium.</title>
        <authorList>
            <person name="Bechtel S."/>
            <person name="Rosenfelder H."/>
            <person name="Duda A."/>
            <person name="Schmidt C.P."/>
            <person name="Ernst U."/>
            <person name="Wellenreuther R."/>
            <person name="Mehrle A."/>
            <person name="Schuster C."/>
            <person name="Bahr A."/>
            <person name="Bloecker H."/>
            <person name="Heubner D."/>
            <person name="Hoerlein A."/>
            <person name="Michel G."/>
            <person name="Wedler H."/>
            <person name="Koehrer K."/>
            <person name="Ottenwaelder B."/>
            <person name="Poustka A."/>
            <person name="Wiemann S."/>
            <person name="Schupp I."/>
        </authorList>
    </citation>
    <scope>NUCLEOTIDE SEQUENCE [LARGE SCALE MRNA] OF 539-822</scope>
    <source>
        <tissue>Fetal brain</tissue>
        <tissue>Uterus</tissue>
    </source>
</reference>
<reference key="5">
    <citation type="journal article" date="2003" name="EMBO J.">
        <title>Rabaptin-5alpha/rabaptin-4 serves as a linker between rab4 and gamma(1)-adaptin in membrane recycling from endosomes.</title>
        <authorList>
            <person name="Deneka M."/>
            <person name="Neeft M."/>
            <person name="Popa I."/>
            <person name="van Oort M."/>
            <person name="Sprong H."/>
            <person name="Oorschot V."/>
            <person name="Klumperman J."/>
            <person name="Schu P."/>
            <person name="van der Sluijs P."/>
        </authorList>
    </citation>
    <scope>INTERACTION WITH RABEP1</scope>
    <scope>SUBCELLULAR LOCATION</scope>
</reference>
<reference key="6">
    <citation type="journal article" date="2004" name="J. Biol. Chem.">
        <title>Definition of the consensus motif recognized by gamma-adaptin ear domains.</title>
        <authorList>
            <person name="Mattera R."/>
            <person name="Ritter B."/>
            <person name="Sidhu S.S."/>
            <person name="McPherson P.S."/>
            <person name="Bonifacino J.S."/>
        </authorList>
    </citation>
    <scope>INTERACTION WITH RABEP1 AND AFTPH</scope>
</reference>
<reference key="7">
    <citation type="journal article" date="2005" name="EMBO J.">
        <title>Gamma-BAR, a novel AP-1-interacting protein involved in post-Golgi trafficking.</title>
        <authorList>
            <person name="Neubrand V.E."/>
            <person name="Will R.D."/>
            <person name="Moebius W."/>
            <person name="Poustka A."/>
            <person name="Wiemann S."/>
            <person name="Schu P."/>
            <person name="Dotti C.G."/>
            <person name="Pepperkok R."/>
            <person name="Simpson J.C."/>
        </authorList>
    </citation>
    <scope>INTERACTION WITH AP1AR</scope>
</reference>
<reference key="8">
    <citation type="journal article" date="2005" name="J. Biol. Chem.">
        <title>AP-1 and AP-3 facilitate lysosomal targeting of Batten disease protein CLN3 via its dileucine motif.</title>
        <authorList>
            <person name="Kyttaelae A."/>
            <person name="Yliannala K."/>
            <person name="Schu P."/>
            <person name="Jalanko A."/>
            <person name="Luzio J.P."/>
        </authorList>
    </citation>
    <scope>INTERACTION WITH CLN3</scope>
</reference>
<reference key="9">
    <citation type="journal article" date="2005" name="Mol. Biol. Cell">
        <title>The aftiphilin/p200/gamma-synergin complex.</title>
        <authorList>
            <person name="Hirst J."/>
            <person name="Borner G.H."/>
            <person name="Harbour M."/>
            <person name="Robinson M.S."/>
        </authorList>
    </citation>
    <scope>FUNCTION</scope>
    <scope>INTERACTION WITH AFTPH</scope>
    <scope>SUBCELLULAR LOCATION</scope>
</reference>
<reference key="10">
    <citation type="journal article" date="2011" name="BMC Syst. Biol.">
        <title>Initial characterization of the human central proteome.</title>
        <authorList>
            <person name="Burkard T.R."/>
            <person name="Planyavsky M."/>
            <person name="Kaupe I."/>
            <person name="Breitwieser F.P."/>
            <person name="Buerckstuemmer T."/>
            <person name="Bennett K.L."/>
            <person name="Superti-Furga G."/>
            <person name="Colinge J."/>
        </authorList>
    </citation>
    <scope>IDENTIFICATION BY MASS SPECTROMETRY [LARGE SCALE ANALYSIS]</scope>
</reference>
<reference key="11">
    <citation type="journal article" date="2014" name="J. Proteomics">
        <title>An enzyme assisted RP-RPLC approach for in-depth analysis of human liver phosphoproteome.</title>
        <authorList>
            <person name="Bian Y."/>
            <person name="Song C."/>
            <person name="Cheng K."/>
            <person name="Dong M."/>
            <person name="Wang F."/>
            <person name="Huang J."/>
            <person name="Sun D."/>
            <person name="Wang L."/>
            <person name="Ye M."/>
            <person name="Zou H."/>
        </authorList>
    </citation>
    <scope>IDENTIFICATION BY MASS SPECTROMETRY [LARGE SCALE ANALYSIS]</scope>
    <source>
        <tissue>Liver</tissue>
    </source>
</reference>
<reference key="12">
    <citation type="journal article" date="2015" name="Proteomics">
        <title>N-terminome analysis of the human mitochondrial proteome.</title>
        <authorList>
            <person name="Vaca Jacome A.S."/>
            <person name="Rabilloud T."/>
            <person name="Schaeffer-Reiss C."/>
            <person name="Rompais M."/>
            <person name="Ayoub D."/>
            <person name="Lane L."/>
            <person name="Bairoch A."/>
            <person name="Van Dorsselaer A."/>
            <person name="Carapito C."/>
        </authorList>
    </citation>
    <scope>IDENTIFICATION BY MASS SPECTROMETRY [LARGE SCALE ANALYSIS]</scope>
</reference>
<reference key="13">
    <citation type="journal article" date="2002" name="Nat. Struct. Biol.">
        <title>Structural basis for the accessory protein recruitment by the gamma-adaptin ear domain.</title>
        <authorList>
            <person name="Nogi T."/>
            <person name="Shiba Y."/>
            <person name="Kawasaki M."/>
            <person name="Shiba T."/>
            <person name="Matsugaki N."/>
            <person name="Igarashi N."/>
            <person name="Suzuki M."/>
            <person name="Kato R."/>
            <person name="Takatsu H."/>
            <person name="Nakayama K."/>
            <person name="Wakatsuki S."/>
        </authorList>
    </citation>
    <scope>X-RAY CRYSTALLOGRAPHY (1.8 ANGSTROMS) OF 703-822</scope>
    <scope>INTERACTION WITH RABEP1 AND SYNRG</scope>
</reference>
<reference key="14">
    <citation type="journal article" date="2021" name="Am. J. Hum. Genet.">
        <title>De novo and bi-allelic variants in AP1G1 cause neurodevelopmental disorder with developmental delay, intellectual disability, and epilepsy.</title>
        <authorList>
            <consortium name="UCLA Clinical Genomics Center"/>
            <person name="Usmani M.A."/>
            <person name="Ahmed Z.M."/>
            <person name="Magini P."/>
            <person name="Pienkowski V.M."/>
            <person name="Rasmussen K.J."/>
            <person name="Hernan R."/>
            <person name="Rasheed F."/>
            <person name="Hussain M."/>
            <person name="Shahzad M."/>
            <person name="Lanpher B.C."/>
            <person name="Niu Z."/>
            <person name="Lim F.Y."/>
            <person name="Pippucci T."/>
            <person name="Ploski R."/>
            <person name="Kraus V."/>
            <person name="Matuszewska K."/>
            <person name="Palombo F."/>
            <person name="Kianmahd J."/>
            <person name="Martinez-Agosto J.A."/>
            <person name="Lee H."/>
            <person name="Colao E."/>
            <person name="Motazacker M.M."/>
            <person name="Brigatti K.W."/>
            <person name="Puffenberger E.G."/>
            <person name="Riazuddin S.A."/>
            <person name="Gonzaga-Jauregui C."/>
            <person name="Chung W.K."/>
            <person name="Wagner M."/>
            <person name="Schultz M.J."/>
            <person name="Seri M."/>
            <person name="Kievit A.J.A."/>
            <person name="Perrotti N."/>
            <person name="Wassink-Ruiter J.S.K."/>
            <person name="van Bokhoven H."/>
            <person name="Riazuddin S."/>
            <person name="Riazuddin S."/>
        </authorList>
    </citation>
    <scope>VARIANTS USRISD GLN-15; GLN-35; TRP-35 AND ARG-817</scope>
    <scope>CHARACTERIZATION OF VARIANTS USRISD GLN-15; GLN-35; TRP-35 AND ARG-817</scope>
    <scope>VARIANTS USRISR HIS-243 AND VAL-366</scope>
    <scope>CHARACTERIZATION OF VARIANTS USRISR HIS-243 AND VAL-366</scope>
    <scope>FUNCTION</scope>
    <scope>SUBCELLULAR LOCATION</scope>
    <scope>INVOLVEMENT IN USRISD</scope>
    <scope>INVOLVEMENT IN USRISR</scope>
</reference>
<protein>
    <recommendedName>
        <fullName>AP-1 complex subunit gamma-1</fullName>
    </recommendedName>
    <alternativeName>
        <fullName>Adaptor protein complex AP-1 subunit gamma-1</fullName>
    </alternativeName>
    <alternativeName>
        <fullName>Adaptor-related protein complex 1 subunit gamma-1</fullName>
    </alternativeName>
    <alternativeName>
        <fullName>Clathrin assembly protein complex 1 gamma-1 large chain</fullName>
    </alternativeName>
    <alternativeName>
        <fullName>Gamma1-adaptin</fullName>
    </alternativeName>
    <alternativeName>
        <fullName>Golgi adaptor HA1/AP1 adaptin subunit gamma-1</fullName>
    </alternativeName>
</protein>
<name>AP1G1_HUMAN</name>
<dbReference type="EMBL" id="Y12226">
    <property type="protein sequence ID" value="CAA72902.1"/>
    <property type="molecule type" value="mRNA"/>
</dbReference>
<dbReference type="EMBL" id="AJ224112">
    <property type="protein sequence ID" value="CAA11832.1"/>
    <property type="molecule type" value="Genomic_DNA"/>
</dbReference>
<dbReference type="EMBL" id="AJ224113">
    <property type="protein sequence ID" value="CAA11832.1"/>
    <property type="status" value="JOINED"/>
    <property type="molecule type" value="Genomic_DNA"/>
</dbReference>
<dbReference type="EMBL" id="AJ224114">
    <property type="protein sequence ID" value="CAA11832.1"/>
    <property type="status" value="JOINED"/>
    <property type="molecule type" value="Genomic_DNA"/>
</dbReference>
<dbReference type="EMBL" id="AB015317">
    <property type="protein sequence ID" value="BAA33389.1"/>
    <property type="molecule type" value="mRNA"/>
</dbReference>
<dbReference type="EMBL" id="AC009097">
    <property type="status" value="NOT_ANNOTATED_CDS"/>
    <property type="molecule type" value="Genomic_DNA"/>
</dbReference>
<dbReference type="EMBL" id="AC010653">
    <property type="status" value="NOT_ANNOTATED_CDS"/>
    <property type="molecule type" value="Genomic_DNA"/>
</dbReference>
<dbReference type="EMBL" id="AL050025">
    <property type="status" value="NOT_ANNOTATED_CDS"/>
    <property type="molecule type" value="mRNA"/>
</dbReference>
<dbReference type="EMBL" id="AL110198">
    <property type="protein sequence ID" value="CAB53673.1"/>
    <property type="molecule type" value="mRNA"/>
</dbReference>
<dbReference type="CCDS" id="CCDS32480.1">
    <molecule id="O43747-1"/>
</dbReference>
<dbReference type="CCDS" id="CCDS45522.1">
    <molecule id="O43747-2"/>
</dbReference>
<dbReference type="RefSeq" id="NP_001025178.1">
    <molecule id="O43747-2"/>
    <property type="nucleotide sequence ID" value="NM_001030007.2"/>
</dbReference>
<dbReference type="RefSeq" id="NP_001119.3">
    <molecule id="O43747-1"/>
    <property type="nucleotide sequence ID" value="NM_001128.5"/>
</dbReference>
<dbReference type="PDB" id="1IU1">
    <property type="method" value="X-ray"/>
    <property type="resolution" value="1.80 A"/>
    <property type="chains" value="A/B=677-822"/>
</dbReference>
<dbReference type="PDBsum" id="1IU1"/>
<dbReference type="BMRB" id="O43747"/>
<dbReference type="SMR" id="O43747"/>
<dbReference type="BioGRID" id="106673">
    <property type="interactions" value="147"/>
</dbReference>
<dbReference type="ComplexPortal" id="CPX-5047">
    <property type="entry name" value="Ubiquitous AP-1 Adaptor complex, sigma1a variant"/>
</dbReference>
<dbReference type="ComplexPortal" id="CPX-5048">
    <property type="entry name" value="Ubiquitous AP-1 Adaptor complex, sigma1b variant"/>
</dbReference>
<dbReference type="ComplexPortal" id="CPX-5049">
    <property type="entry name" value="Ubiquitous AP-1 Adaptor complex, sigma1c variant"/>
</dbReference>
<dbReference type="ComplexPortal" id="CPX-5050">
    <property type="entry name" value="Endothelial AP-1 Adaptor complex, sigma1a variant"/>
</dbReference>
<dbReference type="CORUM" id="O43747"/>
<dbReference type="FunCoup" id="O43747">
    <property type="interactions" value="3976"/>
</dbReference>
<dbReference type="IntAct" id="O43747">
    <property type="interactions" value="69"/>
</dbReference>
<dbReference type="MINT" id="O43747"/>
<dbReference type="STRING" id="9606.ENSP00000377148"/>
<dbReference type="TCDB" id="9.B.278.1.1">
    <property type="family name" value="the organellar-targeting adaptor protein complex (o-apc) family"/>
</dbReference>
<dbReference type="GlyGen" id="O43747">
    <property type="glycosylation" value="1 site, 1 O-linked glycan (1 site)"/>
</dbReference>
<dbReference type="iPTMnet" id="O43747"/>
<dbReference type="MetOSite" id="O43747"/>
<dbReference type="PhosphoSitePlus" id="O43747"/>
<dbReference type="SwissPalm" id="O43747"/>
<dbReference type="BioMuta" id="AP1G1"/>
<dbReference type="jPOST" id="O43747"/>
<dbReference type="MassIVE" id="O43747"/>
<dbReference type="PaxDb" id="9606-ENSP00000377148"/>
<dbReference type="PeptideAtlas" id="O43747"/>
<dbReference type="ProteomicsDB" id="49146">
    <molecule id="O43747-1"/>
</dbReference>
<dbReference type="ProteomicsDB" id="49147">
    <molecule id="O43747-2"/>
</dbReference>
<dbReference type="Pumba" id="O43747"/>
<dbReference type="Antibodypedia" id="3960">
    <property type="antibodies" value="254 antibodies from 34 providers"/>
</dbReference>
<dbReference type="DNASU" id="164"/>
<dbReference type="Ensembl" id="ENST00000299980.9">
    <molecule id="O43747-1"/>
    <property type="protein sequence ID" value="ENSP00000299980.4"/>
    <property type="gene ID" value="ENSG00000166747.13"/>
</dbReference>
<dbReference type="Ensembl" id="ENST00000393512.7">
    <molecule id="O43747-2"/>
    <property type="protein sequence ID" value="ENSP00000377148.3"/>
    <property type="gene ID" value="ENSG00000166747.13"/>
</dbReference>
<dbReference type="Ensembl" id="ENST00000569748.5">
    <molecule id="O43747-1"/>
    <property type="protein sequence ID" value="ENSP00000454523.1"/>
    <property type="gene ID" value="ENSG00000166747.13"/>
</dbReference>
<dbReference type="GeneID" id="164"/>
<dbReference type="KEGG" id="hsa:164"/>
<dbReference type="MANE-Select" id="ENST00000299980.9">
    <property type="protein sequence ID" value="ENSP00000299980.4"/>
    <property type="RefSeq nucleotide sequence ID" value="NM_001128.6"/>
    <property type="RefSeq protein sequence ID" value="NP_001119.3"/>
</dbReference>
<dbReference type="UCSC" id="uc010cgg.4">
    <molecule id="O43747-1"/>
    <property type="organism name" value="human"/>
</dbReference>
<dbReference type="AGR" id="HGNC:555"/>
<dbReference type="CTD" id="164"/>
<dbReference type="DisGeNET" id="164"/>
<dbReference type="GeneCards" id="AP1G1"/>
<dbReference type="HGNC" id="HGNC:555">
    <property type="gene designation" value="AP1G1"/>
</dbReference>
<dbReference type="HPA" id="ENSG00000166747">
    <property type="expression patterns" value="Low tissue specificity"/>
</dbReference>
<dbReference type="MalaCards" id="AP1G1"/>
<dbReference type="MIM" id="603533">
    <property type="type" value="gene"/>
</dbReference>
<dbReference type="MIM" id="619467">
    <property type="type" value="phenotype"/>
</dbReference>
<dbReference type="MIM" id="619548">
    <property type="type" value="phenotype"/>
</dbReference>
<dbReference type="neXtProt" id="NX_O43747"/>
<dbReference type="OpenTargets" id="ENSG00000166747"/>
<dbReference type="Orphanet" id="528084">
    <property type="disease" value="Non-specific syndromic intellectual disability"/>
</dbReference>
<dbReference type="PharmGKB" id="PA24845"/>
<dbReference type="VEuPathDB" id="HostDB:ENSG00000166747"/>
<dbReference type="eggNOG" id="KOG1062">
    <property type="taxonomic scope" value="Eukaryota"/>
</dbReference>
<dbReference type="GeneTree" id="ENSGT00950000182838"/>
<dbReference type="HOGENOM" id="CLU_003824_0_0_1"/>
<dbReference type="InParanoid" id="O43747"/>
<dbReference type="OMA" id="AICAMRI"/>
<dbReference type="OrthoDB" id="28053at2759"/>
<dbReference type="PAN-GO" id="O43747">
    <property type="GO annotations" value="4 GO annotations based on evolutionary models"/>
</dbReference>
<dbReference type="PhylomeDB" id="O43747"/>
<dbReference type="TreeFam" id="TF300367"/>
<dbReference type="PathwayCommons" id="O43747"/>
<dbReference type="Reactome" id="R-HSA-164940">
    <property type="pathway name" value="Nef mediated downregulation of MHC class I complex cell surface expression"/>
</dbReference>
<dbReference type="Reactome" id="R-HSA-2132295">
    <property type="pathway name" value="MHC class II antigen presentation"/>
</dbReference>
<dbReference type="Reactome" id="R-HSA-432720">
    <property type="pathway name" value="Lysosome Vesicle Biogenesis"/>
</dbReference>
<dbReference type="Reactome" id="R-HSA-432722">
    <property type="pathway name" value="Golgi Associated Vesicle Biogenesis"/>
</dbReference>
<dbReference type="SignaLink" id="O43747"/>
<dbReference type="SIGNOR" id="O43747"/>
<dbReference type="BioGRID-ORCS" id="164">
    <property type="hits" value="81 hits in 1162 CRISPR screens"/>
</dbReference>
<dbReference type="ChiTaRS" id="AP1G1">
    <property type="organism name" value="human"/>
</dbReference>
<dbReference type="EvolutionaryTrace" id="O43747"/>
<dbReference type="GeneWiki" id="AP1G1"/>
<dbReference type="GenomeRNAi" id="164"/>
<dbReference type="Pharos" id="O43747">
    <property type="development level" value="Tbio"/>
</dbReference>
<dbReference type="PRO" id="PR:O43747"/>
<dbReference type="Proteomes" id="UP000005640">
    <property type="component" value="Chromosome 16"/>
</dbReference>
<dbReference type="RNAct" id="O43747">
    <property type="molecule type" value="protein"/>
</dbReference>
<dbReference type="Bgee" id="ENSG00000166747">
    <property type="expression patterns" value="Expressed in buccal mucosa cell and 204 other cell types or tissues"/>
</dbReference>
<dbReference type="ExpressionAtlas" id="O43747">
    <property type="expression patterns" value="baseline and differential"/>
</dbReference>
<dbReference type="GO" id="GO:0030121">
    <property type="term" value="C:AP-1 adaptor complex"/>
    <property type="evidence" value="ECO:0000318"/>
    <property type="project" value="GO_Central"/>
</dbReference>
<dbReference type="GO" id="GO:0005905">
    <property type="term" value="C:clathrin-coated pit"/>
    <property type="evidence" value="ECO:0007669"/>
    <property type="project" value="UniProtKB-SubCell"/>
</dbReference>
<dbReference type="GO" id="GO:0030136">
    <property type="term" value="C:clathrin-coated vesicle"/>
    <property type="evidence" value="ECO:0000314"/>
    <property type="project" value="MGI"/>
</dbReference>
<dbReference type="GO" id="GO:0030665">
    <property type="term" value="C:clathrin-coated vesicle membrane"/>
    <property type="evidence" value="ECO:0000250"/>
    <property type="project" value="BHF-UCL"/>
</dbReference>
<dbReference type="GO" id="GO:0005737">
    <property type="term" value="C:cytoplasm"/>
    <property type="evidence" value="ECO:0000304"/>
    <property type="project" value="ProtInc"/>
</dbReference>
<dbReference type="GO" id="GO:0030659">
    <property type="term" value="C:cytoplasmic vesicle membrane"/>
    <property type="evidence" value="ECO:0000304"/>
    <property type="project" value="Reactome"/>
</dbReference>
<dbReference type="GO" id="GO:0005829">
    <property type="term" value="C:cytosol"/>
    <property type="evidence" value="ECO:0000314"/>
    <property type="project" value="HPA"/>
</dbReference>
<dbReference type="GO" id="GO:0005769">
    <property type="term" value="C:early endosome"/>
    <property type="evidence" value="ECO:0000303"/>
    <property type="project" value="ComplexPortal"/>
</dbReference>
<dbReference type="GO" id="GO:0005794">
    <property type="term" value="C:Golgi apparatus"/>
    <property type="evidence" value="ECO:0000314"/>
    <property type="project" value="HPA"/>
</dbReference>
<dbReference type="GO" id="GO:0000139">
    <property type="term" value="C:Golgi membrane"/>
    <property type="evidence" value="ECO:0000304"/>
    <property type="project" value="Reactome"/>
</dbReference>
<dbReference type="GO" id="GO:0043231">
    <property type="term" value="C:intracellular membrane-bounded organelle"/>
    <property type="evidence" value="ECO:0000314"/>
    <property type="project" value="HPA"/>
</dbReference>
<dbReference type="GO" id="GO:0005765">
    <property type="term" value="C:lysosomal membrane"/>
    <property type="evidence" value="ECO:0000304"/>
    <property type="project" value="Reactome"/>
</dbReference>
<dbReference type="GO" id="GO:0016020">
    <property type="term" value="C:membrane"/>
    <property type="evidence" value="ECO:0007005"/>
    <property type="project" value="UniProtKB"/>
</dbReference>
<dbReference type="GO" id="GO:0048471">
    <property type="term" value="C:perinuclear region of cytoplasm"/>
    <property type="evidence" value="ECO:0007669"/>
    <property type="project" value="UniProtKB-SubCell"/>
</dbReference>
<dbReference type="GO" id="GO:0098793">
    <property type="term" value="C:presynapse"/>
    <property type="evidence" value="ECO:0007669"/>
    <property type="project" value="GOC"/>
</dbReference>
<dbReference type="GO" id="GO:0055037">
    <property type="term" value="C:recycling endosome"/>
    <property type="evidence" value="ECO:0000314"/>
    <property type="project" value="UniProtKB"/>
</dbReference>
<dbReference type="GO" id="GO:0032588">
    <property type="term" value="C:trans-Golgi network membrane"/>
    <property type="evidence" value="ECO:0000304"/>
    <property type="project" value="Reactome"/>
</dbReference>
<dbReference type="GO" id="GO:0035615">
    <property type="term" value="F:clathrin adaptor activity"/>
    <property type="evidence" value="ECO:0000318"/>
    <property type="project" value="GO_Central"/>
</dbReference>
<dbReference type="GO" id="GO:0005518">
    <property type="term" value="F:collagen binding"/>
    <property type="evidence" value="ECO:0007669"/>
    <property type="project" value="Ensembl"/>
</dbReference>
<dbReference type="GO" id="GO:0030742">
    <property type="term" value="F:GTP-dependent protein binding"/>
    <property type="evidence" value="ECO:0000353"/>
    <property type="project" value="ParkinsonsUK-UCL"/>
</dbReference>
<dbReference type="GO" id="GO:0019894">
    <property type="term" value="F:kinesin binding"/>
    <property type="evidence" value="ECO:0000353"/>
    <property type="project" value="UniProtKB"/>
</dbReference>
<dbReference type="GO" id="GO:0031267">
    <property type="term" value="F:small GTPase binding"/>
    <property type="evidence" value="ECO:0000353"/>
    <property type="project" value="ParkinsonsUK-UCL"/>
</dbReference>
<dbReference type="GO" id="GO:0110010">
    <property type="term" value="P:basolateral protein secretion"/>
    <property type="evidence" value="ECO:0000303"/>
    <property type="project" value="ComplexPortal"/>
</dbReference>
<dbReference type="GO" id="GO:0035646">
    <property type="term" value="P:endosome to melanosome transport"/>
    <property type="evidence" value="ECO:0000315"/>
    <property type="project" value="ParkinsonsUK-UCL"/>
</dbReference>
<dbReference type="GO" id="GO:0090160">
    <property type="term" value="P:Golgi to lysosome transport"/>
    <property type="evidence" value="ECO:0000315"/>
    <property type="project" value="UniProtKB"/>
</dbReference>
<dbReference type="GO" id="GO:0006896">
    <property type="term" value="P:Golgi to vacuole transport"/>
    <property type="evidence" value="ECO:0000318"/>
    <property type="project" value="GO_Central"/>
</dbReference>
<dbReference type="GO" id="GO:0006886">
    <property type="term" value="P:intracellular protein transport"/>
    <property type="evidence" value="ECO:0007669"/>
    <property type="project" value="InterPro"/>
</dbReference>
<dbReference type="GO" id="GO:1903232">
    <property type="term" value="P:melanosome assembly"/>
    <property type="evidence" value="ECO:0000303"/>
    <property type="project" value="ComplexPortal"/>
</dbReference>
<dbReference type="GO" id="GO:0032438">
    <property type="term" value="P:melanosome organization"/>
    <property type="evidence" value="ECO:0000305"/>
    <property type="project" value="ParkinsonsUK-UCL"/>
</dbReference>
<dbReference type="GO" id="GO:0060155">
    <property type="term" value="P:platelet dense granule organization"/>
    <property type="evidence" value="ECO:0000303"/>
    <property type="project" value="ComplexPortal"/>
</dbReference>
<dbReference type="GO" id="GO:0043323">
    <property type="term" value="P:positive regulation of natural killer cell degranulation"/>
    <property type="evidence" value="ECO:0000315"/>
    <property type="project" value="UniProtKB"/>
</dbReference>
<dbReference type="GO" id="GO:0045954">
    <property type="term" value="P:positive regulation of natural killer cell mediated cytotoxicity"/>
    <property type="evidence" value="ECO:0000315"/>
    <property type="project" value="UniProtKB"/>
</dbReference>
<dbReference type="GO" id="GO:0016182">
    <property type="term" value="P:synaptic vesicle budding from endosome"/>
    <property type="evidence" value="ECO:0007669"/>
    <property type="project" value="Ensembl"/>
</dbReference>
<dbReference type="GO" id="GO:0048488">
    <property type="term" value="P:synaptic vesicle endocytosis"/>
    <property type="evidence" value="ECO:0007669"/>
    <property type="project" value="Ensembl"/>
</dbReference>
<dbReference type="GO" id="GO:0016192">
    <property type="term" value="P:vesicle-mediated transport"/>
    <property type="evidence" value="ECO:0000303"/>
    <property type="project" value="ComplexPortal"/>
</dbReference>
<dbReference type="FunFam" id="1.25.10.10:FF:000030">
    <property type="entry name" value="AP-1 complex subunit gamma"/>
    <property type="match status" value="1"/>
</dbReference>
<dbReference type="FunFam" id="2.60.40.1230:FF:000002">
    <property type="entry name" value="AP-1 complex subunit gamma"/>
    <property type="match status" value="1"/>
</dbReference>
<dbReference type="Gene3D" id="2.60.40.1230">
    <property type="match status" value="1"/>
</dbReference>
<dbReference type="Gene3D" id="1.25.10.10">
    <property type="entry name" value="Leucine-rich Repeat Variant"/>
    <property type="match status" value="1"/>
</dbReference>
<dbReference type="InterPro" id="IPR050840">
    <property type="entry name" value="Adaptor_Complx_Large_Subunit"/>
</dbReference>
<dbReference type="InterPro" id="IPR017107">
    <property type="entry name" value="AP1_complex_gsu"/>
</dbReference>
<dbReference type="InterPro" id="IPR011989">
    <property type="entry name" value="ARM-like"/>
</dbReference>
<dbReference type="InterPro" id="IPR016024">
    <property type="entry name" value="ARM-type_fold"/>
</dbReference>
<dbReference type="InterPro" id="IPR002553">
    <property type="entry name" value="Clathrin/coatomer_adapt-like_N"/>
</dbReference>
<dbReference type="InterPro" id="IPR008152">
    <property type="entry name" value="Clathrin_a/b/g-adaptin_app_Ig"/>
</dbReference>
<dbReference type="InterPro" id="IPR013041">
    <property type="entry name" value="Clathrin_app_Ig-like_sf"/>
</dbReference>
<dbReference type="InterPro" id="IPR008153">
    <property type="entry name" value="GAE_dom"/>
</dbReference>
<dbReference type="PANTHER" id="PTHR22780">
    <property type="entry name" value="ADAPTIN, ALPHA/GAMMA/EPSILON"/>
    <property type="match status" value="1"/>
</dbReference>
<dbReference type="Pfam" id="PF01602">
    <property type="entry name" value="Adaptin_N"/>
    <property type="match status" value="1"/>
</dbReference>
<dbReference type="Pfam" id="PF02883">
    <property type="entry name" value="Alpha_adaptinC2"/>
    <property type="match status" value="1"/>
</dbReference>
<dbReference type="PIRSF" id="PIRSF037094">
    <property type="entry name" value="AP1_complex_gamma"/>
    <property type="match status" value="1"/>
</dbReference>
<dbReference type="SMART" id="SM00809">
    <property type="entry name" value="Alpha_adaptinC2"/>
    <property type="match status" value="1"/>
</dbReference>
<dbReference type="SUPFAM" id="SSF48371">
    <property type="entry name" value="ARM repeat"/>
    <property type="match status" value="1"/>
</dbReference>
<dbReference type="SUPFAM" id="SSF49348">
    <property type="entry name" value="Clathrin adaptor appendage domain"/>
    <property type="match status" value="1"/>
</dbReference>
<dbReference type="PROSITE" id="PS50180">
    <property type="entry name" value="GAE"/>
    <property type="match status" value="1"/>
</dbReference>
<feature type="chain" id="PRO_0000193758" description="AP-1 complex subunit gamma-1">
    <location>
        <begin position="1"/>
        <end position="822"/>
    </location>
</feature>
<feature type="domain" description="GAE" evidence="2">
    <location>
        <begin position="702"/>
        <end position="817"/>
    </location>
</feature>
<feature type="region of interest" description="Disordered" evidence="3">
    <location>
        <begin position="597"/>
        <end position="628"/>
    </location>
</feature>
<feature type="splice variant" id="VSP_040133" description="In isoform 2." evidence="12">
    <original>R</original>
    <variation>RKNE</variation>
    <location>
        <position position="213"/>
    </location>
</feature>
<feature type="sequence variant" id="VAR_086350" description="In USRISD; does not rescue morphological defects in a zebrafish animal model." evidence="10">
    <original>R</original>
    <variation>Q</variation>
    <location>
        <position position="15"/>
    </location>
</feature>
<feature type="sequence variant" id="VAR_086351" description="In USRISD; does not rescue morphological defects in a zebrafish animal model." evidence="10">
    <original>R</original>
    <variation>Q</variation>
    <location>
        <position position="35"/>
    </location>
</feature>
<feature type="sequence variant" id="VAR_086352" description="In USRISD; does not rescue morphological defects in a zebrafish animal model." evidence="10">
    <original>R</original>
    <variation>W</variation>
    <location>
        <position position="35"/>
    </location>
</feature>
<feature type="sequence variant" id="VAR_048194" description="In dbSNP:rs36037071.">
    <original>V</original>
    <variation>G</variation>
    <location>
        <position position="195"/>
    </location>
</feature>
<feature type="sequence variant" id="VAR_086353" description="In USRISR; does not fully rescue morphological defects in a zebrafish animal model; affects trafficking of transferrin from early to recycling endosomes; no effect on subcellular location in the perinuclear region; does not affect interaction with AP-1 complex subunits AP1B1, AP1M1 and AP1S1." evidence="10">
    <original>P</original>
    <variation>H</variation>
    <location>
        <position position="243"/>
    </location>
</feature>
<feature type="sequence variant" id="VAR_086354" description="In USRISR; does not fully rescue morphological defects in a zebrafish animal model; affects trafficking of transferrin from recycling endosomes to plasma membrane; no effect on subcellular location in the perinuclear region; does not affect interaction with AP-1 complex subunits AP1B1, AP1M1 and AP1S1." evidence="10">
    <original>M</original>
    <variation>V</variation>
    <location>
        <position position="366"/>
    </location>
</feature>
<feature type="sequence variant" id="VAR_013572" description="In dbSNP:rs904763." evidence="11">
    <original>P</original>
    <variation>H</variation>
    <location>
        <position position="685"/>
    </location>
</feature>
<feature type="sequence variant" id="VAR_086355" description="In USRISD; does not fully rescue morphological defects in a zebrafish animal model." evidence="10">
    <original>P</original>
    <variation>R</variation>
    <location>
        <position position="817"/>
    </location>
</feature>
<feature type="sequence conflict" description="In Ref. 1; CAA11832." evidence="13" ref="1">
    <original>Y</original>
    <variation>N</variation>
    <location>
        <position position="61"/>
    </location>
</feature>
<feature type="sequence conflict" description="In Ref. 1; CAA11832." evidence="13" ref="1">
    <original>E</original>
    <variation>K</variation>
    <location>
        <position position="141"/>
    </location>
</feature>
<feature type="sequence conflict" description="In Ref. 1; CAA11832." evidence="13" ref="1">
    <original>R</original>
    <variation>K</variation>
    <location>
        <position position="154"/>
    </location>
</feature>
<feature type="sequence conflict" description="In Ref. 1; CAA11832." evidence="13" ref="1">
    <original>MF</original>
    <variation>NV</variation>
    <location>
        <begin position="174"/>
        <end position="175"/>
    </location>
</feature>
<feature type="strand" evidence="14">
    <location>
        <begin position="707"/>
        <end position="712"/>
    </location>
</feature>
<feature type="strand" evidence="14">
    <location>
        <begin position="715"/>
        <end position="723"/>
    </location>
</feature>
<feature type="strand" evidence="14">
    <location>
        <begin position="730"/>
        <end position="739"/>
    </location>
</feature>
<feature type="strand" evidence="14">
    <location>
        <begin position="741"/>
        <end position="743"/>
    </location>
</feature>
<feature type="strand" evidence="14">
    <location>
        <begin position="745"/>
        <end position="753"/>
    </location>
</feature>
<feature type="strand" evidence="14">
    <location>
        <begin position="758"/>
        <end position="762"/>
    </location>
</feature>
<feature type="helix" evidence="14">
    <location>
        <begin position="772"/>
        <end position="774"/>
    </location>
</feature>
<feature type="strand" evidence="14">
    <location>
        <begin position="778"/>
        <end position="785"/>
    </location>
</feature>
<feature type="strand" evidence="14">
    <location>
        <begin position="795"/>
        <end position="802"/>
    </location>
</feature>
<feature type="strand" evidence="14">
    <location>
        <begin position="805"/>
        <end position="812"/>
    </location>
</feature>
<feature type="helix" evidence="14">
    <location>
        <begin position="818"/>
        <end position="820"/>
    </location>
</feature>
<proteinExistence type="evidence at protein level"/>
<organism>
    <name type="scientific">Homo sapiens</name>
    <name type="common">Human</name>
    <dbReference type="NCBI Taxonomy" id="9606"/>
    <lineage>
        <taxon>Eukaryota</taxon>
        <taxon>Metazoa</taxon>
        <taxon>Chordata</taxon>
        <taxon>Craniata</taxon>
        <taxon>Vertebrata</taxon>
        <taxon>Euteleostomi</taxon>
        <taxon>Mammalia</taxon>
        <taxon>Eutheria</taxon>
        <taxon>Euarchontoglires</taxon>
        <taxon>Primates</taxon>
        <taxon>Haplorrhini</taxon>
        <taxon>Catarrhini</taxon>
        <taxon>Hominidae</taxon>
        <taxon>Homo</taxon>
    </lineage>
</organism>